<name>HDNUC_BPT4</name>
<proteinExistence type="evidence at protein level"/>
<feature type="chain" id="PRO_0000165040" description="Head completion nuclease">
    <location>
        <begin position="1"/>
        <end position="150"/>
    </location>
</feature>
<feature type="active site" evidence="1 2">
    <location>
        <position position="29"/>
    </location>
</feature>
<feature type="active site" evidence="1 2">
    <location>
        <position position="68"/>
    </location>
</feature>
<feature type="active site" evidence="1 2">
    <location>
        <position position="84"/>
    </location>
</feature>
<feature type="mutagenesis site" description="Reduced nuclease activity." evidence="3">
    <original>E</original>
    <variation>C</variation>
    <location>
        <position position="29"/>
    </location>
</feature>
<feature type="sequence conflict" description="In Ref. 3; AAA50417." evidence="4" ref="3">
    <original>E</original>
    <variation>K</variation>
    <location>
        <position position="41"/>
    </location>
</feature>
<feature type="sequence conflict" description="In Ref. 3; AAA50417." evidence="4" ref="3">
    <original>E</original>
    <variation>K</variation>
    <location>
        <position position="78"/>
    </location>
</feature>
<protein>
    <recommendedName>
        <fullName evidence="2">Head completion nuclease</fullName>
        <ecNumber evidence="2 3">3.1.-.-</ecNumber>
    </recommendedName>
    <alternativeName>
        <fullName>Head completion protein Gp50</fullName>
    </alternativeName>
    <alternativeName>
        <fullName>Protein Gp4</fullName>
    </alternativeName>
</protein>
<accession>P15075</accession>
<reference key="1">
    <citation type="journal article" date="1989" name="Nucleic Acids Res.">
        <title>Sequencing, cloning and overexpression of genes of bacteriophage T4 between map positions 74.325 and 77.184.</title>
        <authorList>
            <person name="Koch T."/>
            <person name="Lamm N."/>
            <person name="Rueger W."/>
        </authorList>
    </citation>
    <scope>NUCLEOTIDE SEQUENCE [GENOMIC DNA]</scope>
</reference>
<reference key="2">
    <citation type="journal article" date="2003" name="Microbiol. Mol. Biol. Rev.">
        <title>Bacteriophage T4 genome.</title>
        <authorList>
            <person name="Miller E.S."/>
            <person name="Kutter E."/>
            <person name="Mosig G."/>
            <person name="Arisaka F."/>
            <person name="Kunisawa T."/>
            <person name="Ruger W."/>
        </authorList>
    </citation>
    <scope>NUCLEOTIDE SEQUENCE [LARGE SCALE GENOMIC DNA]</scope>
</reference>
<reference key="3">
    <citation type="journal article" date="1989" name="J. Bacteriol.">
        <title>Cloning and identification of bacteriophage T4 gene 2 product gp2 and action of gp2 on infecting DNA in vivo.</title>
        <authorList>
            <person name="Lipinska B."/>
            <person name="Rao A.S.M.K."/>
            <person name="Bolten B.M."/>
            <person name="Balakrishnan R."/>
            <person name="Goldberg E.B."/>
        </authorList>
    </citation>
    <scope>NUCLEOTIDE SEQUENCE [GENOMIC DNA] OF 30-150</scope>
</reference>
<reference key="4">
    <citation type="journal article" date="2020" name="Virology">
        <title>Gp4 is a nuclease required for morphogenesis of T4-like bacteriophages.</title>
        <authorList>
            <person name="Benler S."/>
            <person name="Hung S.H."/>
            <person name="Vander Griend J.A."/>
            <person name="Peters G.A."/>
            <person name="Rohwer F."/>
            <person name="Segall A.M."/>
        </authorList>
    </citation>
    <scope>FUNCTION</scope>
    <scope>MUTAGENESIS OF GLU-29</scope>
</reference>
<comment type="function">
    <text evidence="2 3">During phage morphogenesis, plays an essential role in the head-tail joining step (PubMed:32056848). The associated nuclease activity is essential for morphogenesis, possibly by cleaving packaged DNA to enable the joining of heads to tails (PubMed:32056848). Displays both exo- and endonuclease activity (PubMed:32056848).</text>
</comment>
<comment type="similarity">
    <text evidence="2">Belongs to the Caudovirales head completion nuclease family.</text>
</comment>
<keyword id="KW-0255">Endonuclease</keyword>
<keyword id="KW-0269">Exonuclease</keyword>
<keyword id="KW-0378">Hydrolase</keyword>
<keyword id="KW-0540">Nuclease</keyword>
<keyword id="KW-1185">Reference proteome</keyword>
<sequence length="150" mass="17627">MAYSGKWVPKNISKYRGDPKKITYRSNWEKFFFEWLDKNPEIIAWGSETAVIPYFCNAEGKKRRYFMDIWMKDSSGQEFFIEIKPKKETQPPVKPAHLTTAAKKRFMNEIYTWSVNTDKWKAAQSLAEKRGIKFRILTEDGLRALGFKGA</sequence>
<evidence type="ECO:0000250" key="1">
    <source>
        <dbReference type="UniProtKB" id="P13988"/>
    </source>
</evidence>
<evidence type="ECO:0000255" key="2">
    <source>
        <dbReference type="HAMAP-Rule" id="MF_04160"/>
    </source>
</evidence>
<evidence type="ECO:0000269" key="3">
    <source>
    </source>
</evidence>
<evidence type="ECO:0000305" key="4"/>
<dbReference type="EC" id="3.1.-.-" evidence="2 3"/>
<dbReference type="EMBL" id="X14845">
    <property type="protein sequence ID" value="CAA32950.1"/>
    <property type="molecule type" value="Genomic_DNA"/>
</dbReference>
<dbReference type="EMBL" id="AF158101">
    <property type="protein sequence ID" value="AAD42481.1"/>
    <property type="molecule type" value="Genomic_DNA"/>
</dbReference>
<dbReference type="EMBL" id="M23012">
    <property type="protein sequence ID" value="AAA50417.1"/>
    <property type="status" value="ALT_SEQ"/>
    <property type="molecule type" value="Genomic_DNA"/>
</dbReference>
<dbReference type="PIR" id="A32254">
    <property type="entry name" value="ZTBPT9"/>
</dbReference>
<dbReference type="RefSeq" id="NP_049755.1">
    <property type="nucleotide sequence ID" value="NC_000866.4"/>
</dbReference>
<dbReference type="GeneID" id="1258590"/>
<dbReference type="KEGG" id="vg:1258590"/>
<dbReference type="OrthoDB" id="13184at10239"/>
<dbReference type="Proteomes" id="UP000009087">
    <property type="component" value="Segment"/>
</dbReference>
<dbReference type="GO" id="GO:0004519">
    <property type="term" value="F:endonuclease activity"/>
    <property type="evidence" value="ECO:0000314"/>
    <property type="project" value="UniProtKB"/>
</dbReference>
<dbReference type="GO" id="GO:0004527">
    <property type="term" value="F:exonuclease activity"/>
    <property type="evidence" value="ECO:0000314"/>
    <property type="project" value="UniProtKB"/>
</dbReference>
<dbReference type="Gene3D" id="3.40.91.30">
    <property type="match status" value="1"/>
</dbReference>
<dbReference type="HAMAP" id="MF_04160">
    <property type="entry name" value="NUCL_HEAD_T4"/>
    <property type="match status" value="1"/>
</dbReference>
<dbReference type="InterPro" id="IPR046390">
    <property type="entry name" value="NUCL_HEAD_T4"/>
</dbReference>
<dbReference type="InterPro" id="IPR014833">
    <property type="entry name" value="TnsA_N"/>
</dbReference>
<dbReference type="Pfam" id="PF08722">
    <property type="entry name" value="Tn7_TnsA-like_N"/>
    <property type="match status" value="1"/>
</dbReference>
<gene>
    <name type="primary">50</name>
    <name type="synonym">4</name>
    <name type="synonym">65</name>
</gene>
<organism>
    <name type="scientific">Enterobacteria phage T4</name>
    <name type="common">Bacteriophage T4</name>
    <dbReference type="NCBI Taxonomy" id="10665"/>
    <lineage>
        <taxon>Viruses</taxon>
        <taxon>Duplodnaviria</taxon>
        <taxon>Heunggongvirae</taxon>
        <taxon>Uroviricota</taxon>
        <taxon>Caudoviricetes</taxon>
        <taxon>Straboviridae</taxon>
        <taxon>Tevenvirinae</taxon>
        <taxon>Tequatrovirus</taxon>
    </lineage>
</organism>
<organismHost>
    <name type="scientific">Escherichia coli</name>
    <dbReference type="NCBI Taxonomy" id="562"/>
</organismHost>